<proteinExistence type="inferred from homology"/>
<organism>
    <name type="scientific">Salmonella choleraesuis (strain SC-B67)</name>
    <dbReference type="NCBI Taxonomy" id="321314"/>
    <lineage>
        <taxon>Bacteria</taxon>
        <taxon>Pseudomonadati</taxon>
        <taxon>Pseudomonadota</taxon>
        <taxon>Gammaproteobacteria</taxon>
        <taxon>Enterobacterales</taxon>
        <taxon>Enterobacteriaceae</taxon>
        <taxon>Salmonella</taxon>
    </lineage>
</organism>
<name>RL31_SALCH</name>
<evidence type="ECO:0000255" key="1">
    <source>
        <dbReference type="HAMAP-Rule" id="MF_00501"/>
    </source>
</evidence>
<evidence type="ECO:0000305" key="2"/>
<sequence length="70" mass="7719">MKKGIHPNYVEITATCSCGNVIKTHSTVGHDLNLDVCGKCHPFFTGKQRVVDTGGRVERFNKRFSIPGSK</sequence>
<protein>
    <recommendedName>
        <fullName evidence="1">Large ribosomal subunit protein bL31</fullName>
    </recommendedName>
    <alternativeName>
        <fullName evidence="2">50S ribosomal protein L31</fullName>
    </alternativeName>
</protein>
<keyword id="KW-0479">Metal-binding</keyword>
<keyword id="KW-0687">Ribonucleoprotein</keyword>
<keyword id="KW-0689">Ribosomal protein</keyword>
<keyword id="KW-0694">RNA-binding</keyword>
<keyword id="KW-0699">rRNA-binding</keyword>
<keyword id="KW-0862">Zinc</keyword>
<accession>Q57HC1</accession>
<reference key="1">
    <citation type="journal article" date="2005" name="Nucleic Acids Res.">
        <title>The genome sequence of Salmonella enterica serovar Choleraesuis, a highly invasive and resistant zoonotic pathogen.</title>
        <authorList>
            <person name="Chiu C.-H."/>
            <person name="Tang P."/>
            <person name="Chu C."/>
            <person name="Hu S."/>
            <person name="Bao Q."/>
            <person name="Yu J."/>
            <person name="Chou Y.-Y."/>
            <person name="Wang H.-S."/>
            <person name="Lee Y.-S."/>
        </authorList>
    </citation>
    <scope>NUCLEOTIDE SEQUENCE [LARGE SCALE GENOMIC DNA]</scope>
    <source>
        <strain>SC-B67</strain>
    </source>
</reference>
<feature type="chain" id="PRO_0000173156" description="Large ribosomal subunit protein bL31">
    <location>
        <begin position="1"/>
        <end position="70"/>
    </location>
</feature>
<feature type="binding site" evidence="1">
    <location>
        <position position="16"/>
    </location>
    <ligand>
        <name>Zn(2+)</name>
        <dbReference type="ChEBI" id="CHEBI:29105"/>
    </ligand>
</feature>
<feature type="binding site" evidence="1">
    <location>
        <position position="18"/>
    </location>
    <ligand>
        <name>Zn(2+)</name>
        <dbReference type="ChEBI" id="CHEBI:29105"/>
    </ligand>
</feature>
<feature type="binding site" evidence="1">
    <location>
        <position position="37"/>
    </location>
    <ligand>
        <name>Zn(2+)</name>
        <dbReference type="ChEBI" id="CHEBI:29105"/>
    </ligand>
</feature>
<feature type="binding site" evidence="1">
    <location>
        <position position="40"/>
    </location>
    <ligand>
        <name>Zn(2+)</name>
        <dbReference type="ChEBI" id="CHEBI:29105"/>
    </ligand>
</feature>
<gene>
    <name evidence="1" type="primary">rpmE</name>
    <name type="ordered locus">SCH_3985</name>
</gene>
<comment type="function">
    <text evidence="1">Binds the 23S rRNA.</text>
</comment>
<comment type="cofactor">
    <cofactor evidence="1">
        <name>Zn(2+)</name>
        <dbReference type="ChEBI" id="CHEBI:29105"/>
    </cofactor>
    <text evidence="1">Binds 1 zinc ion per subunit.</text>
</comment>
<comment type="subunit">
    <text evidence="1">Part of the 50S ribosomal subunit.</text>
</comment>
<comment type="similarity">
    <text evidence="1">Belongs to the bacterial ribosomal protein bL31 family. Type A subfamily.</text>
</comment>
<comment type="sequence caution" evidence="2">
    <conflict type="erroneous initiation">
        <sequence resource="EMBL-CDS" id="AAX67891"/>
    </conflict>
</comment>
<dbReference type="EMBL" id="AE017220">
    <property type="protein sequence ID" value="AAX67891.1"/>
    <property type="status" value="ALT_INIT"/>
    <property type="molecule type" value="Genomic_DNA"/>
</dbReference>
<dbReference type="RefSeq" id="WP_000715284.1">
    <property type="nucleotide sequence ID" value="NC_006905.1"/>
</dbReference>
<dbReference type="SMR" id="Q57HC1"/>
<dbReference type="GeneID" id="66758349"/>
<dbReference type="KEGG" id="sec:SCH_3985"/>
<dbReference type="HOGENOM" id="CLU_114306_4_0_6"/>
<dbReference type="Proteomes" id="UP000000538">
    <property type="component" value="Chromosome"/>
</dbReference>
<dbReference type="GO" id="GO:1990904">
    <property type="term" value="C:ribonucleoprotein complex"/>
    <property type="evidence" value="ECO:0007669"/>
    <property type="project" value="UniProtKB-KW"/>
</dbReference>
<dbReference type="GO" id="GO:0005840">
    <property type="term" value="C:ribosome"/>
    <property type="evidence" value="ECO:0007669"/>
    <property type="project" value="UniProtKB-KW"/>
</dbReference>
<dbReference type="GO" id="GO:0046872">
    <property type="term" value="F:metal ion binding"/>
    <property type="evidence" value="ECO:0007669"/>
    <property type="project" value="UniProtKB-KW"/>
</dbReference>
<dbReference type="GO" id="GO:0019843">
    <property type="term" value="F:rRNA binding"/>
    <property type="evidence" value="ECO:0007669"/>
    <property type="project" value="UniProtKB-KW"/>
</dbReference>
<dbReference type="GO" id="GO:0003735">
    <property type="term" value="F:structural constituent of ribosome"/>
    <property type="evidence" value="ECO:0007669"/>
    <property type="project" value="InterPro"/>
</dbReference>
<dbReference type="GO" id="GO:0006412">
    <property type="term" value="P:translation"/>
    <property type="evidence" value="ECO:0007669"/>
    <property type="project" value="UniProtKB-UniRule"/>
</dbReference>
<dbReference type="FunFam" id="4.10.830.30:FF:000001">
    <property type="entry name" value="50S ribosomal protein L31"/>
    <property type="match status" value="1"/>
</dbReference>
<dbReference type="Gene3D" id="4.10.830.30">
    <property type="entry name" value="Ribosomal protein L31"/>
    <property type="match status" value="1"/>
</dbReference>
<dbReference type="HAMAP" id="MF_00501">
    <property type="entry name" value="Ribosomal_bL31_1"/>
    <property type="match status" value="1"/>
</dbReference>
<dbReference type="InterPro" id="IPR034704">
    <property type="entry name" value="Ribosomal_bL28/bL31-like_sf"/>
</dbReference>
<dbReference type="InterPro" id="IPR002150">
    <property type="entry name" value="Ribosomal_bL31"/>
</dbReference>
<dbReference type="InterPro" id="IPR027491">
    <property type="entry name" value="Ribosomal_bL31_A"/>
</dbReference>
<dbReference type="InterPro" id="IPR042105">
    <property type="entry name" value="Ribosomal_bL31_sf"/>
</dbReference>
<dbReference type="NCBIfam" id="TIGR00105">
    <property type="entry name" value="L31"/>
    <property type="match status" value="1"/>
</dbReference>
<dbReference type="NCBIfam" id="NF000612">
    <property type="entry name" value="PRK00019.1"/>
    <property type="match status" value="1"/>
</dbReference>
<dbReference type="NCBIfam" id="NF001809">
    <property type="entry name" value="PRK00528.1"/>
    <property type="match status" value="1"/>
</dbReference>
<dbReference type="PANTHER" id="PTHR33280">
    <property type="entry name" value="50S RIBOSOMAL PROTEIN L31, CHLOROPLASTIC"/>
    <property type="match status" value="1"/>
</dbReference>
<dbReference type="PANTHER" id="PTHR33280:SF6">
    <property type="entry name" value="LARGE RIBOSOMAL SUBUNIT PROTEIN BL31A"/>
    <property type="match status" value="1"/>
</dbReference>
<dbReference type="Pfam" id="PF01197">
    <property type="entry name" value="Ribosomal_L31"/>
    <property type="match status" value="1"/>
</dbReference>
<dbReference type="PRINTS" id="PR01249">
    <property type="entry name" value="RIBOSOMALL31"/>
</dbReference>
<dbReference type="SUPFAM" id="SSF143800">
    <property type="entry name" value="L28p-like"/>
    <property type="match status" value="1"/>
</dbReference>
<dbReference type="PROSITE" id="PS01143">
    <property type="entry name" value="RIBOSOMAL_L31"/>
    <property type="match status" value="1"/>
</dbReference>